<reference key="1">
    <citation type="submission" date="2007-11" db="EMBL/GenBank/DDBJ databases">
        <authorList>
            <consortium name="The Salmonella enterica serovar Paratyphi B Genome Sequencing Project"/>
            <person name="McClelland M."/>
            <person name="Sanderson E.K."/>
            <person name="Porwollik S."/>
            <person name="Spieth J."/>
            <person name="Clifton W.S."/>
            <person name="Fulton R."/>
            <person name="Cordes M."/>
            <person name="Wollam A."/>
            <person name="Shah N."/>
            <person name="Pepin K."/>
            <person name="Bhonagiri V."/>
            <person name="Nash W."/>
            <person name="Johnson M."/>
            <person name="Thiruvilangam P."/>
            <person name="Wilson R."/>
        </authorList>
    </citation>
    <scope>NUCLEOTIDE SEQUENCE [LARGE SCALE GENOMIC DNA]</scope>
    <source>
        <strain>ATCC BAA-1250 / SPB7</strain>
    </source>
</reference>
<feature type="chain" id="PRO_1000120393" description="GMP synthase [glutamine-hydrolyzing]">
    <location>
        <begin position="1"/>
        <end position="525"/>
    </location>
</feature>
<feature type="domain" description="Glutamine amidotransferase type-1" evidence="1">
    <location>
        <begin position="9"/>
        <end position="207"/>
    </location>
</feature>
<feature type="domain" description="GMPS ATP-PPase" evidence="1">
    <location>
        <begin position="208"/>
        <end position="400"/>
    </location>
</feature>
<feature type="active site" description="Nucleophile" evidence="1">
    <location>
        <position position="86"/>
    </location>
</feature>
<feature type="active site" evidence="1">
    <location>
        <position position="181"/>
    </location>
</feature>
<feature type="active site" evidence="1">
    <location>
        <position position="183"/>
    </location>
</feature>
<feature type="binding site" evidence="1">
    <location>
        <begin position="235"/>
        <end position="241"/>
    </location>
    <ligand>
        <name>ATP</name>
        <dbReference type="ChEBI" id="CHEBI:30616"/>
    </ligand>
</feature>
<accession>A9N218</accession>
<protein>
    <recommendedName>
        <fullName evidence="1">GMP synthase [glutamine-hydrolyzing]</fullName>
        <ecNumber evidence="1">6.3.5.2</ecNumber>
    </recommendedName>
    <alternativeName>
        <fullName evidence="1">GMP synthetase</fullName>
    </alternativeName>
    <alternativeName>
        <fullName evidence="1">Glutamine amidotransferase</fullName>
    </alternativeName>
</protein>
<keyword id="KW-0067">ATP-binding</keyword>
<keyword id="KW-0315">Glutamine amidotransferase</keyword>
<keyword id="KW-0332">GMP biosynthesis</keyword>
<keyword id="KW-0436">Ligase</keyword>
<keyword id="KW-0547">Nucleotide-binding</keyword>
<keyword id="KW-0658">Purine biosynthesis</keyword>
<comment type="function">
    <text evidence="1">Catalyzes the synthesis of GMP from XMP.</text>
</comment>
<comment type="catalytic activity">
    <reaction evidence="1">
        <text>XMP + L-glutamine + ATP + H2O = GMP + L-glutamate + AMP + diphosphate + 2 H(+)</text>
        <dbReference type="Rhea" id="RHEA:11680"/>
        <dbReference type="ChEBI" id="CHEBI:15377"/>
        <dbReference type="ChEBI" id="CHEBI:15378"/>
        <dbReference type="ChEBI" id="CHEBI:29985"/>
        <dbReference type="ChEBI" id="CHEBI:30616"/>
        <dbReference type="ChEBI" id="CHEBI:33019"/>
        <dbReference type="ChEBI" id="CHEBI:57464"/>
        <dbReference type="ChEBI" id="CHEBI:58115"/>
        <dbReference type="ChEBI" id="CHEBI:58359"/>
        <dbReference type="ChEBI" id="CHEBI:456215"/>
        <dbReference type="EC" id="6.3.5.2"/>
    </reaction>
</comment>
<comment type="pathway">
    <text evidence="1">Purine metabolism; GMP biosynthesis; GMP from XMP (L-Gln route): step 1/1.</text>
</comment>
<comment type="subunit">
    <text evidence="1">Homodimer.</text>
</comment>
<gene>
    <name evidence="1" type="primary">guaA</name>
    <name type="ordered locus">SPAB_00435</name>
</gene>
<sequence>MTENIHKHRILILDFGSQYTQLVARRVRELGVYCELWAWDVTEAQIRDFNPSGIILSGGPESTTEENSPRAPQYVFEAGVPVFGVCYGMQTMAMQLGGHVEGSNEREFGYAQVEVLTDSALVRGIEDSLTADGKPLLDVWMSHGDKVTAIPSDFVTVASTESCPFAIMANEEKRFYGVQFHPEVTHTRQGMRMLERFVRDICQCEALWTPAKIIDDAVARIREQVGDDKVILGLSGGVDSSVTAMLLHRAIGKNLTCVFVDNGLLRLNEAEQVMDMFGDHFGLNIVHVPAEERFLSALAGENDPEAKRKIIGRVFVEVFDEEALKLEDVKWLAQGTIYPDVIESAASATGKAHVIKSHHNVGGLPKEMKMGLVEPLKELFKDEVRKIGLELGLPYDMLYRHPFPGPGLGVRVLGEVKKEYCDLLRRADAIFIEELRKADLYDKVSQAFTVFLPVRSVGVMGDGRKYDWVVSLRAVETIDFMTAHWAHLPYDFLGRVSNRIINEVNGISRVVYDISGKPPATIEWE</sequence>
<name>GUAA_SALPB</name>
<dbReference type="EC" id="6.3.5.2" evidence="1"/>
<dbReference type="EMBL" id="CP000886">
    <property type="protein sequence ID" value="ABX65868.1"/>
    <property type="molecule type" value="Genomic_DNA"/>
</dbReference>
<dbReference type="RefSeq" id="WP_000138296.1">
    <property type="nucleotide sequence ID" value="NC_010102.1"/>
</dbReference>
<dbReference type="SMR" id="A9N218"/>
<dbReference type="MEROPS" id="C26.957"/>
<dbReference type="KEGG" id="spq:SPAB_00435"/>
<dbReference type="PATRIC" id="fig|1016998.12.peg.409"/>
<dbReference type="HOGENOM" id="CLU_014340_0_5_6"/>
<dbReference type="BioCyc" id="SENT1016998:SPAB_RS01765-MONOMER"/>
<dbReference type="UniPathway" id="UPA00189">
    <property type="reaction ID" value="UER00296"/>
</dbReference>
<dbReference type="Proteomes" id="UP000008556">
    <property type="component" value="Chromosome"/>
</dbReference>
<dbReference type="GO" id="GO:0005829">
    <property type="term" value="C:cytosol"/>
    <property type="evidence" value="ECO:0007669"/>
    <property type="project" value="TreeGrafter"/>
</dbReference>
<dbReference type="GO" id="GO:0005524">
    <property type="term" value="F:ATP binding"/>
    <property type="evidence" value="ECO:0007669"/>
    <property type="project" value="UniProtKB-UniRule"/>
</dbReference>
<dbReference type="GO" id="GO:0003921">
    <property type="term" value="F:GMP synthase activity"/>
    <property type="evidence" value="ECO:0007669"/>
    <property type="project" value="InterPro"/>
</dbReference>
<dbReference type="CDD" id="cd01742">
    <property type="entry name" value="GATase1_GMP_Synthase"/>
    <property type="match status" value="1"/>
</dbReference>
<dbReference type="CDD" id="cd01997">
    <property type="entry name" value="GMP_synthase_C"/>
    <property type="match status" value="1"/>
</dbReference>
<dbReference type="FunFam" id="3.30.300.10:FF:000002">
    <property type="entry name" value="GMP synthase [glutamine-hydrolyzing]"/>
    <property type="match status" value="1"/>
</dbReference>
<dbReference type="FunFam" id="3.40.50.620:FF:000001">
    <property type="entry name" value="GMP synthase [glutamine-hydrolyzing]"/>
    <property type="match status" value="1"/>
</dbReference>
<dbReference type="FunFam" id="3.40.50.880:FF:000001">
    <property type="entry name" value="GMP synthase [glutamine-hydrolyzing]"/>
    <property type="match status" value="1"/>
</dbReference>
<dbReference type="Gene3D" id="3.30.300.10">
    <property type="match status" value="1"/>
</dbReference>
<dbReference type="Gene3D" id="3.40.50.880">
    <property type="match status" value="1"/>
</dbReference>
<dbReference type="Gene3D" id="3.40.50.620">
    <property type="entry name" value="HUPs"/>
    <property type="match status" value="1"/>
</dbReference>
<dbReference type="HAMAP" id="MF_00344">
    <property type="entry name" value="GMP_synthase"/>
    <property type="match status" value="1"/>
</dbReference>
<dbReference type="InterPro" id="IPR029062">
    <property type="entry name" value="Class_I_gatase-like"/>
</dbReference>
<dbReference type="InterPro" id="IPR017926">
    <property type="entry name" value="GATASE"/>
</dbReference>
<dbReference type="InterPro" id="IPR001674">
    <property type="entry name" value="GMP_synth_C"/>
</dbReference>
<dbReference type="InterPro" id="IPR004739">
    <property type="entry name" value="GMP_synth_GATase"/>
</dbReference>
<dbReference type="InterPro" id="IPR022955">
    <property type="entry name" value="GMP_synthase"/>
</dbReference>
<dbReference type="InterPro" id="IPR025777">
    <property type="entry name" value="GMPS_ATP_PPase_dom"/>
</dbReference>
<dbReference type="InterPro" id="IPR022310">
    <property type="entry name" value="NAD/GMP_synthase"/>
</dbReference>
<dbReference type="InterPro" id="IPR014729">
    <property type="entry name" value="Rossmann-like_a/b/a_fold"/>
</dbReference>
<dbReference type="NCBIfam" id="TIGR00884">
    <property type="entry name" value="guaA_Cterm"/>
    <property type="match status" value="1"/>
</dbReference>
<dbReference type="NCBIfam" id="TIGR00888">
    <property type="entry name" value="guaA_Nterm"/>
    <property type="match status" value="1"/>
</dbReference>
<dbReference type="NCBIfam" id="NF000848">
    <property type="entry name" value="PRK00074.1"/>
    <property type="match status" value="1"/>
</dbReference>
<dbReference type="PANTHER" id="PTHR11922:SF2">
    <property type="entry name" value="GMP SYNTHASE [GLUTAMINE-HYDROLYZING]"/>
    <property type="match status" value="1"/>
</dbReference>
<dbReference type="PANTHER" id="PTHR11922">
    <property type="entry name" value="GMP SYNTHASE-RELATED"/>
    <property type="match status" value="1"/>
</dbReference>
<dbReference type="Pfam" id="PF00117">
    <property type="entry name" value="GATase"/>
    <property type="match status" value="1"/>
</dbReference>
<dbReference type="Pfam" id="PF00958">
    <property type="entry name" value="GMP_synt_C"/>
    <property type="match status" value="1"/>
</dbReference>
<dbReference type="Pfam" id="PF02540">
    <property type="entry name" value="NAD_synthase"/>
    <property type="match status" value="1"/>
</dbReference>
<dbReference type="PRINTS" id="PR00097">
    <property type="entry name" value="ANTSNTHASEII"/>
</dbReference>
<dbReference type="PRINTS" id="PR00099">
    <property type="entry name" value="CPSGATASE"/>
</dbReference>
<dbReference type="PRINTS" id="PR00096">
    <property type="entry name" value="GATASE"/>
</dbReference>
<dbReference type="SUPFAM" id="SSF52402">
    <property type="entry name" value="Adenine nucleotide alpha hydrolases-like"/>
    <property type="match status" value="1"/>
</dbReference>
<dbReference type="SUPFAM" id="SSF52317">
    <property type="entry name" value="Class I glutamine amidotransferase-like"/>
    <property type="match status" value="1"/>
</dbReference>
<dbReference type="SUPFAM" id="SSF54810">
    <property type="entry name" value="GMP synthetase C-terminal dimerisation domain"/>
    <property type="match status" value="1"/>
</dbReference>
<dbReference type="PROSITE" id="PS51273">
    <property type="entry name" value="GATASE_TYPE_1"/>
    <property type="match status" value="1"/>
</dbReference>
<dbReference type="PROSITE" id="PS51553">
    <property type="entry name" value="GMPS_ATP_PPASE"/>
    <property type="match status" value="1"/>
</dbReference>
<organism>
    <name type="scientific">Salmonella paratyphi B (strain ATCC BAA-1250 / SPB7)</name>
    <dbReference type="NCBI Taxonomy" id="1016998"/>
    <lineage>
        <taxon>Bacteria</taxon>
        <taxon>Pseudomonadati</taxon>
        <taxon>Pseudomonadota</taxon>
        <taxon>Gammaproteobacteria</taxon>
        <taxon>Enterobacterales</taxon>
        <taxon>Enterobacteriaceae</taxon>
        <taxon>Salmonella</taxon>
    </lineage>
</organism>
<proteinExistence type="inferred from homology"/>
<evidence type="ECO:0000255" key="1">
    <source>
        <dbReference type="HAMAP-Rule" id="MF_00344"/>
    </source>
</evidence>